<keyword id="KW-0012">Acyltransferase</keyword>
<keyword id="KW-0350">Heme biosynthesis</keyword>
<keyword id="KW-0663">Pyridoxal phosphate</keyword>
<keyword id="KW-1185">Reference proteome</keyword>
<keyword id="KW-0808">Transferase</keyword>
<evidence type="ECO:0000250" key="1">
    <source>
        <dbReference type="UniProtKB" id="P18079"/>
    </source>
</evidence>
<evidence type="ECO:0000305" key="2"/>
<feature type="chain" id="PRO_0000163826" description="5-aminolevulinate synthase">
    <location>
        <begin position="1"/>
        <end position="409"/>
    </location>
</feature>
<feature type="active site" evidence="1">
    <location>
        <position position="248"/>
    </location>
</feature>
<feature type="binding site" evidence="1">
    <location>
        <position position="21"/>
    </location>
    <ligand>
        <name>substrate</name>
    </ligand>
</feature>
<feature type="binding site" evidence="1">
    <location>
        <position position="137"/>
    </location>
    <ligand>
        <name>substrate</name>
    </ligand>
</feature>
<feature type="binding site" evidence="1">
    <location>
        <position position="156"/>
    </location>
    <ligand>
        <name>substrate</name>
    </ligand>
</feature>
<feature type="binding site" description="in other chain" evidence="1">
    <location>
        <position position="189"/>
    </location>
    <ligand>
        <name>pyridoxal 5'-phosphate</name>
        <dbReference type="ChEBI" id="CHEBI:597326"/>
        <note>ligand shared between dimeric partners</note>
    </ligand>
</feature>
<feature type="binding site" description="in other chain" evidence="1">
    <location>
        <position position="217"/>
    </location>
    <ligand>
        <name>pyridoxal 5'-phosphate</name>
        <dbReference type="ChEBI" id="CHEBI:597326"/>
        <note>ligand shared between dimeric partners</note>
    </ligand>
</feature>
<feature type="binding site" description="in other chain" evidence="1">
    <location>
        <position position="245"/>
    </location>
    <ligand>
        <name>pyridoxal 5'-phosphate</name>
        <dbReference type="ChEBI" id="CHEBI:597326"/>
        <note>ligand shared between dimeric partners</note>
    </ligand>
</feature>
<feature type="binding site" evidence="1">
    <location>
        <position position="277"/>
    </location>
    <ligand>
        <name>pyridoxal 5'-phosphate</name>
        <dbReference type="ChEBI" id="CHEBI:597326"/>
        <note>ligand shared between dimeric partners</note>
    </ligand>
</feature>
<feature type="binding site" evidence="1">
    <location>
        <position position="278"/>
    </location>
    <ligand>
        <name>pyridoxal 5'-phosphate</name>
        <dbReference type="ChEBI" id="CHEBI:597326"/>
        <note>ligand shared between dimeric partners</note>
    </ligand>
</feature>
<feature type="binding site" evidence="1">
    <location>
        <position position="365"/>
    </location>
    <ligand>
        <name>substrate</name>
    </ligand>
</feature>
<feature type="modified residue" description="N6-(pyridoxal phosphate)lysine" evidence="1">
    <location>
        <position position="248"/>
    </location>
</feature>
<feature type="sequence conflict" description="In Ref. 1; AAA62279." evidence="2" ref="1">
    <original>Q</original>
    <variation>T</variation>
    <location>
        <position position="35"/>
    </location>
</feature>
<feature type="sequence conflict" description="In Ref. 1; AAA62279." evidence="2" ref="1">
    <original>S</original>
    <variation>A</variation>
    <location>
        <position position="101"/>
    </location>
</feature>
<feature type="sequence conflict" description="In Ref. 1; AAA62279." evidence="2" ref="1">
    <original>A</original>
    <variation>V</variation>
    <location>
        <position position="115"/>
    </location>
</feature>
<feature type="sequence conflict" description="In Ref. 1; AAA62279." evidence="2" ref="1">
    <original>FDGA</original>
    <variation>STAP</variation>
    <location>
        <begin position="152"/>
        <end position="155"/>
    </location>
</feature>
<feature type="sequence conflict" description="In Ref. 1; AAA62279." evidence="2" ref="1">
    <original>A</original>
    <variation>G</variation>
    <location>
        <position position="165"/>
    </location>
</feature>
<feature type="sequence conflict" description="In Ref. 1; AAA62279." evidence="2" ref="1">
    <original>G</original>
    <variation>A</variation>
    <location>
        <position position="195"/>
    </location>
</feature>
<feature type="sequence conflict" description="In Ref. 1; AAA62279." evidence="2" ref="1">
    <original>A</original>
    <variation>E</variation>
    <location>
        <position position="199"/>
    </location>
</feature>
<feature type="sequence conflict" description="In Ref. 1; AAA62279." evidence="2" ref="1">
    <original>G</original>
    <variation>A</variation>
    <location>
        <position position="247"/>
    </location>
</feature>
<feature type="sequence conflict" description="In Ref. 1; AAA62279." evidence="2" ref="1">
    <original>AAS</original>
    <variation>GFG</variation>
    <location>
        <begin position="258"/>
        <end position="260"/>
    </location>
</feature>
<feature type="sequence conflict" description="In Ref. 1; AAA62279." evidence="2" ref="1">
    <original>A</original>
    <variation>V</variation>
    <location>
        <position position="288"/>
    </location>
</feature>
<feature type="sequence conflict" description="In Ref. 1; AAA62279." evidence="2" ref="1">
    <original>LL</original>
    <variation>FV</variation>
    <location>
        <begin position="302"/>
        <end position="303"/>
    </location>
</feature>
<feature type="sequence conflict" description="In Ref. 1; AAA62279." evidence="2" ref="1">
    <original>ARI</original>
    <variation>GRL</variation>
    <location>
        <begin position="311"/>
        <end position="313"/>
    </location>
</feature>
<feature type="sequence conflict" description="In Ref. 1; AAA62279." evidence="2" ref="1">
    <original>L</original>
    <variation>A</variation>
    <location>
        <position position="321"/>
    </location>
</feature>
<feature type="sequence conflict" description="In Ref. 1; AAA62279." evidence="2" ref="1">
    <original>I</original>
    <variation>V</variation>
    <location>
        <position position="325"/>
    </location>
</feature>
<feature type="sequence conflict" description="In Ref. 1; AAA62279." evidence="2" ref="1">
    <original>G</original>
    <variation>S</variation>
    <location>
        <position position="355"/>
    </location>
</feature>
<feature type="sequence conflict" description="In Ref. 1; AAA62279." evidence="2" ref="1">
    <original>P</original>
    <variation>A</variation>
    <location>
        <position position="377"/>
    </location>
</feature>
<reference key="1">
    <citation type="journal article" date="1994" name="J. Bacteriol.">
        <title>Differential reduction in soluble and membrane-bound c-type cytochrome contents in a Paracoccus denitrificans mutant partially deficient in 5-aminolevulinate synthase activity.</title>
        <authorList>
            <person name="Page M.D."/>
            <person name="Ferguson S.J."/>
        </authorList>
    </citation>
    <scope>NUCLEOTIDE SEQUENCE [GENOMIC DNA]</scope>
</reference>
<reference key="2">
    <citation type="submission" date="2006-12" db="EMBL/GenBank/DDBJ databases">
        <title>Complete sequence of chromosome 1 of Paracoccus denitrificans PD1222.</title>
        <authorList>
            <person name="Copeland A."/>
            <person name="Lucas S."/>
            <person name="Lapidus A."/>
            <person name="Barry K."/>
            <person name="Detter J.C."/>
            <person name="Glavina del Rio T."/>
            <person name="Hammon N."/>
            <person name="Israni S."/>
            <person name="Dalin E."/>
            <person name="Tice H."/>
            <person name="Pitluck S."/>
            <person name="Munk A.C."/>
            <person name="Brettin T."/>
            <person name="Bruce D."/>
            <person name="Han C."/>
            <person name="Tapia R."/>
            <person name="Gilna P."/>
            <person name="Schmutz J."/>
            <person name="Larimer F."/>
            <person name="Land M."/>
            <person name="Hauser L."/>
            <person name="Kyrpides N."/>
            <person name="Lykidis A."/>
            <person name="Spiro S."/>
            <person name="Richardson D.J."/>
            <person name="Moir J.W.B."/>
            <person name="Ferguson S.J."/>
            <person name="van Spanning R.J.M."/>
            <person name="Richardson P."/>
        </authorList>
    </citation>
    <scope>NUCLEOTIDE SEQUENCE [LARGE SCALE GENOMIC DNA]</scope>
    <source>
        <strain>Pd 1222</strain>
    </source>
</reference>
<gene>
    <name type="primary">hemA</name>
    <name type="ordered locus">Pden_1822</name>
</gene>
<dbReference type="EC" id="2.3.1.37"/>
<dbReference type="EMBL" id="U12508">
    <property type="protein sequence ID" value="AAA62279.1"/>
    <property type="molecule type" value="Genomic_DNA"/>
</dbReference>
<dbReference type="EMBL" id="CP000489">
    <property type="protein sequence ID" value="ABL69919.1"/>
    <property type="status" value="ALT_INIT"/>
    <property type="molecule type" value="Genomic_DNA"/>
</dbReference>
<dbReference type="RefSeq" id="WP_041529892.1">
    <property type="nucleotide sequence ID" value="NC_008686.1"/>
</dbReference>
<dbReference type="SMR" id="P43089"/>
<dbReference type="STRING" id="318586.Pden_1822"/>
<dbReference type="EnsemblBacteria" id="ABL69919">
    <property type="protein sequence ID" value="ABL69919"/>
    <property type="gene ID" value="Pden_1822"/>
</dbReference>
<dbReference type="GeneID" id="93450218"/>
<dbReference type="KEGG" id="pde:Pden_1822"/>
<dbReference type="eggNOG" id="COG0156">
    <property type="taxonomic scope" value="Bacteria"/>
</dbReference>
<dbReference type="HOGENOM" id="CLU_015846_11_1_5"/>
<dbReference type="OrthoDB" id="9807157at2"/>
<dbReference type="UniPathway" id="UPA00251">
    <property type="reaction ID" value="UER00375"/>
</dbReference>
<dbReference type="Proteomes" id="UP000000361">
    <property type="component" value="Chromosome 1"/>
</dbReference>
<dbReference type="GO" id="GO:0003870">
    <property type="term" value="F:5-aminolevulinate synthase activity"/>
    <property type="evidence" value="ECO:0007669"/>
    <property type="project" value="UniProtKB-EC"/>
</dbReference>
<dbReference type="GO" id="GO:0030170">
    <property type="term" value="F:pyridoxal phosphate binding"/>
    <property type="evidence" value="ECO:0007669"/>
    <property type="project" value="InterPro"/>
</dbReference>
<dbReference type="GO" id="GO:0006782">
    <property type="term" value="P:protoporphyrinogen IX biosynthetic process"/>
    <property type="evidence" value="ECO:0007669"/>
    <property type="project" value="UniProtKB-UniPathway"/>
</dbReference>
<dbReference type="CDD" id="cd06454">
    <property type="entry name" value="KBL_like"/>
    <property type="match status" value="1"/>
</dbReference>
<dbReference type="FunFam" id="3.40.640.10:FF:000006">
    <property type="entry name" value="5-aminolevulinate synthase, mitochondrial"/>
    <property type="match status" value="1"/>
</dbReference>
<dbReference type="Gene3D" id="3.90.1150.10">
    <property type="entry name" value="Aspartate Aminotransferase, domain 1"/>
    <property type="match status" value="1"/>
</dbReference>
<dbReference type="Gene3D" id="3.40.640.10">
    <property type="entry name" value="Type I PLP-dependent aspartate aminotransferase-like (Major domain)"/>
    <property type="match status" value="1"/>
</dbReference>
<dbReference type="InterPro" id="IPR010961">
    <property type="entry name" value="4pyrrol_synth_NH2levulA_synth"/>
</dbReference>
<dbReference type="InterPro" id="IPR001917">
    <property type="entry name" value="Aminotrans_II_pyridoxalP_BS"/>
</dbReference>
<dbReference type="InterPro" id="IPR004839">
    <property type="entry name" value="Aminotransferase_I/II_large"/>
</dbReference>
<dbReference type="InterPro" id="IPR050087">
    <property type="entry name" value="AON_synthase_class-II"/>
</dbReference>
<dbReference type="InterPro" id="IPR015424">
    <property type="entry name" value="PyrdxlP-dep_Trfase"/>
</dbReference>
<dbReference type="InterPro" id="IPR015421">
    <property type="entry name" value="PyrdxlP-dep_Trfase_major"/>
</dbReference>
<dbReference type="InterPro" id="IPR015422">
    <property type="entry name" value="PyrdxlP-dep_Trfase_small"/>
</dbReference>
<dbReference type="NCBIfam" id="TIGR01821">
    <property type="entry name" value="5aminolev_synth"/>
    <property type="match status" value="1"/>
</dbReference>
<dbReference type="PANTHER" id="PTHR13693:SF102">
    <property type="entry name" value="2-AMINO-3-KETOBUTYRATE COENZYME A LIGASE, MITOCHONDRIAL"/>
    <property type="match status" value="1"/>
</dbReference>
<dbReference type="PANTHER" id="PTHR13693">
    <property type="entry name" value="CLASS II AMINOTRANSFERASE/8-AMINO-7-OXONONANOATE SYNTHASE"/>
    <property type="match status" value="1"/>
</dbReference>
<dbReference type="Pfam" id="PF00155">
    <property type="entry name" value="Aminotran_1_2"/>
    <property type="match status" value="1"/>
</dbReference>
<dbReference type="SUPFAM" id="SSF53383">
    <property type="entry name" value="PLP-dependent transferases"/>
    <property type="match status" value="1"/>
</dbReference>
<dbReference type="PROSITE" id="PS00599">
    <property type="entry name" value="AA_TRANSFER_CLASS_2"/>
    <property type="match status" value="1"/>
</dbReference>
<name>HEM1_PARDP</name>
<protein>
    <recommendedName>
        <fullName>5-aminolevulinate synthase</fullName>
        <ecNumber>2.3.1.37</ecNumber>
    </recommendedName>
    <alternativeName>
        <fullName>5-aminolevulinic acid synthase</fullName>
    </alternativeName>
    <alternativeName>
        <fullName>Delta-ALA synthase</fullName>
    </alternativeName>
    <alternativeName>
        <fullName>Delta-aminolevulinate synthase</fullName>
    </alternativeName>
</protein>
<organism>
    <name type="scientific">Paracoccus denitrificans (strain Pd 1222)</name>
    <dbReference type="NCBI Taxonomy" id="318586"/>
    <lineage>
        <taxon>Bacteria</taxon>
        <taxon>Pseudomonadati</taxon>
        <taxon>Pseudomonadota</taxon>
        <taxon>Alphaproteobacteria</taxon>
        <taxon>Rhodobacterales</taxon>
        <taxon>Paracoccaceae</taxon>
        <taxon>Paracoccus</taxon>
    </lineage>
</organism>
<accession>P43089</accession>
<accession>A1B325</accession>
<comment type="catalytic activity">
    <reaction>
        <text>succinyl-CoA + glycine + H(+) = 5-aminolevulinate + CO2 + CoA</text>
        <dbReference type="Rhea" id="RHEA:12921"/>
        <dbReference type="ChEBI" id="CHEBI:15378"/>
        <dbReference type="ChEBI" id="CHEBI:16526"/>
        <dbReference type="ChEBI" id="CHEBI:57287"/>
        <dbReference type="ChEBI" id="CHEBI:57292"/>
        <dbReference type="ChEBI" id="CHEBI:57305"/>
        <dbReference type="ChEBI" id="CHEBI:356416"/>
        <dbReference type="EC" id="2.3.1.37"/>
    </reaction>
</comment>
<comment type="cofactor">
    <cofactor evidence="1">
        <name>pyridoxal 5'-phosphate</name>
        <dbReference type="ChEBI" id="CHEBI:597326"/>
    </cofactor>
</comment>
<comment type="pathway">
    <text>Porphyrin-containing compound metabolism; protoporphyrin-IX biosynthesis; 5-aminolevulinate from glycine: step 1/1.</text>
</comment>
<comment type="subunit">
    <text evidence="1">Homodimer.</text>
</comment>
<comment type="similarity">
    <text evidence="2">Belongs to the class-II pyridoxal-phosphate-dependent aminotransferase family.</text>
</comment>
<comment type="sequence caution" evidence="2">
    <conflict type="erroneous initiation">
        <sequence resource="EMBL-CDS" id="ABL69919"/>
    </conflict>
</comment>
<sequence>MDYSAALDQAIGKLHEEGRYRTFIDIERRKGAYPQAVWTRPDGTETRITVWCGNDYLGMGQHPVVLAAMHEALDATGAGSGGTRNISGTTVYHKRLEAELSDLHGKEAALVFSSAYIANDATLSTLRKLFPGLIIYSDELNHASMIEGIKRFDGAKRIFRHNDVAHLRELLAADDPEAPKLIAFESIYSMDGDFGPIKAICDLADEFNALTYLDEVHAVGMYGPRGGGVAERDGLSHRIDIFNGTLGKAFGVFGGYIAASARMVDAIRSYAPGFIFTTSLPPAVAAGAAASIAFLKTAEGQLLRDQQQLNARILKMRLRGLGMPIMDHGSHIVPVHVGNPVHCKALSDMLLADFGIYVQPINFPTVPRGTERLRFTPSPVHDPKQIDHLVKAMDSLWSQCKLNRSTSAA</sequence>
<proteinExistence type="inferred from homology"/>